<comment type="function">
    <text evidence="1">Catalyzes the acyloin condensation reaction between C atoms 2 and 3 of pyruvate and glyceraldehyde 3-phosphate to yield 1-deoxy-D-xylulose-5-phosphate (DXP).</text>
</comment>
<comment type="catalytic activity">
    <reaction evidence="1">
        <text>D-glyceraldehyde 3-phosphate + pyruvate + H(+) = 1-deoxy-D-xylulose 5-phosphate + CO2</text>
        <dbReference type="Rhea" id="RHEA:12605"/>
        <dbReference type="ChEBI" id="CHEBI:15361"/>
        <dbReference type="ChEBI" id="CHEBI:15378"/>
        <dbReference type="ChEBI" id="CHEBI:16526"/>
        <dbReference type="ChEBI" id="CHEBI:57792"/>
        <dbReference type="ChEBI" id="CHEBI:59776"/>
        <dbReference type="EC" id="2.2.1.7"/>
    </reaction>
</comment>
<comment type="cofactor">
    <cofactor evidence="1">
        <name>Mg(2+)</name>
        <dbReference type="ChEBI" id="CHEBI:18420"/>
    </cofactor>
    <text evidence="1">Binds 1 Mg(2+) ion per subunit.</text>
</comment>
<comment type="cofactor">
    <cofactor evidence="1">
        <name>thiamine diphosphate</name>
        <dbReference type="ChEBI" id="CHEBI:58937"/>
    </cofactor>
    <text evidence="1">Binds 1 thiamine pyrophosphate per subunit.</text>
</comment>
<comment type="pathway">
    <text evidence="1">Metabolic intermediate biosynthesis; 1-deoxy-D-xylulose 5-phosphate biosynthesis; 1-deoxy-D-xylulose 5-phosphate from D-glyceraldehyde 3-phosphate and pyruvate: step 1/1.</text>
</comment>
<comment type="subunit">
    <text evidence="1">Homodimer.</text>
</comment>
<comment type="similarity">
    <text evidence="1">Belongs to the transketolase family. DXPS subfamily.</text>
</comment>
<gene>
    <name evidence="1" type="primary">dxs1</name>
    <name type="ordered locus">GSU0686</name>
</gene>
<proteinExistence type="inferred from homology"/>
<dbReference type="EC" id="2.2.1.7" evidence="1"/>
<dbReference type="EMBL" id="AE017180">
    <property type="protein sequence ID" value="AAR34016.1"/>
    <property type="molecule type" value="Genomic_DNA"/>
</dbReference>
<dbReference type="RefSeq" id="NP_951743.1">
    <property type="nucleotide sequence ID" value="NC_002939.5"/>
</dbReference>
<dbReference type="SMR" id="Q74FC3"/>
<dbReference type="FunCoup" id="Q74FC3">
    <property type="interactions" value="532"/>
</dbReference>
<dbReference type="STRING" id="243231.GSU0686"/>
<dbReference type="EnsemblBacteria" id="AAR34016">
    <property type="protein sequence ID" value="AAR34016"/>
    <property type="gene ID" value="GSU0686"/>
</dbReference>
<dbReference type="KEGG" id="gsu:GSU0686"/>
<dbReference type="PATRIC" id="fig|243231.5.peg.680"/>
<dbReference type="eggNOG" id="COG1154">
    <property type="taxonomic scope" value="Bacteria"/>
</dbReference>
<dbReference type="HOGENOM" id="CLU_009227_1_4_7"/>
<dbReference type="InParanoid" id="Q74FC3"/>
<dbReference type="OrthoDB" id="9803371at2"/>
<dbReference type="UniPathway" id="UPA00064">
    <property type="reaction ID" value="UER00091"/>
</dbReference>
<dbReference type="Proteomes" id="UP000000577">
    <property type="component" value="Chromosome"/>
</dbReference>
<dbReference type="GO" id="GO:0005829">
    <property type="term" value="C:cytosol"/>
    <property type="evidence" value="ECO:0000318"/>
    <property type="project" value="GO_Central"/>
</dbReference>
<dbReference type="GO" id="GO:0008661">
    <property type="term" value="F:1-deoxy-D-xylulose-5-phosphate synthase activity"/>
    <property type="evidence" value="ECO:0000318"/>
    <property type="project" value="GO_Central"/>
</dbReference>
<dbReference type="GO" id="GO:0000287">
    <property type="term" value="F:magnesium ion binding"/>
    <property type="evidence" value="ECO:0007669"/>
    <property type="project" value="UniProtKB-UniRule"/>
</dbReference>
<dbReference type="GO" id="GO:0030976">
    <property type="term" value="F:thiamine pyrophosphate binding"/>
    <property type="evidence" value="ECO:0007669"/>
    <property type="project" value="UniProtKB-UniRule"/>
</dbReference>
<dbReference type="GO" id="GO:0052865">
    <property type="term" value="P:1-deoxy-D-xylulose 5-phosphate biosynthetic process"/>
    <property type="evidence" value="ECO:0007669"/>
    <property type="project" value="UniProtKB-UniPathway"/>
</dbReference>
<dbReference type="GO" id="GO:0019288">
    <property type="term" value="P:isopentenyl diphosphate biosynthetic process, methylerythritol 4-phosphate pathway"/>
    <property type="evidence" value="ECO:0000318"/>
    <property type="project" value="GO_Central"/>
</dbReference>
<dbReference type="GO" id="GO:0016114">
    <property type="term" value="P:terpenoid biosynthetic process"/>
    <property type="evidence" value="ECO:0007669"/>
    <property type="project" value="UniProtKB-UniRule"/>
</dbReference>
<dbReference type="GO" id="GO:0009228">
    <property type="term" value="P:thiamine biosynthetic process"/>
    <property type="evidence" value="ECO:0007669"/>
    <property type="project" value="UniProtKB-UniRule"/>
</dbReference>
<dbReference type="CDD" id="cd02007">
    <property type="entry name" value="TPP_DXS"/>
    <property type="match status" value="1"/>
</dbReference>
<dbReference type="CDD" id="cd07033">
    <property type="entry name" value="TPP_PYR_DXS_TK_like"/>
    <property type="match status" value="1"/>
</dbReference>
<dbReference type="FunFam" id="3.40.50.920:FF:000002">
    <property type="entry name" value="1-deoxy-D-xylulose-5-phosphate synthase"/>
    <property type="match status" value="1"/>
</dbReference>
<dbReference type="FunFam" id="3.40.50.970:FF:000005">
    <property type="entry name" value="1-deoxy-D-xylulose-5-phosphate synthase"/>
    <property type="match status" value="1"/>
</dbReference>
<dbReference type="Gene3D" id="3.40.50.920">
    <property type="match status" value="1"/>
</dbReference>
<dbReference type="Gene3D" id="3.40.50.970">
    <property type="match status" value="2"/>
</dbReference>
<dbReference type="HAMAP" id="MF_00315">
    <property type="entry name" value="DXP_synth"/>
    <property type="match status" value="1"/>
</dbReference>
<dbReference type="InterPro" id="IPR005477">
    <property type="entry name" value="Dxylulose-5-P_synthase"/>
</dbReference>
<dbReference type="InterPro" id="IPR029061">
    <property type="entry name" value="THDP-binding"/>
</dbReference>
<dbReference type="InterPro" id="IPR009014">
    <property type="entry name" value="Transketo_C/PFOR_II"/>
</dbReference>
<dbReference type="InterPro" id="IPR005475">
    <property type="entry name" value="Transketolase-like_Pyr-bd"/>
</dbReference>
<dbReference type="InterPro" id="IPR020826">
    <property type="entry name" value="Transketolase_BS"/>
</dbReference>
<dbReference type="InterPro" id="IPR033248">
    <property type="entry name" value="Transketolase_C"/>
</dbReference>
<dbReference type="InterPro" id="IPR049557">
    <property type="entry name" value="Transketolase_CS"/>
</dbReference>
<dbReference type="NCBIfam" id="TIGR00204">
    <property type="entry name" value="dxs"/>
    <property type="match status" value="1"/>
</dbReference>
<dbReference type="NCBIfam" id="NF003933">
    <property type="entry name" value="PRK05444.2-2"/>
    <property type="match status" value="1"/>
</dbReference>
<dbReference type="PANTHER" id="PTHR43322">
    <property type="entry name" value="1-D-DEOXYXYLULOSE 5-PHOSPHATE SYNTHASE-RELATED"/>
    <property type="match status" value="1"/>
</dbReference>
<dbReference type="PANTHER" id="PTHR43322:SF5">
    <property type="entry name" value="1-DEOXY-D-XYLULOSE-5-PHOSPHATE SYNTHASE, CHLOROPLASTIC"/>
    <property type="match status" value="1"/>
</dbReference>
<dbReference type="Pfam" id="PF13292">
    <property type="entry name" value="DXP_synthase_N"/>
    <property type="match status" value="1"/>
</dbReference>
<dbReference type="Pfam" id="PF02779">
    <property type="entry name" value="Transket_pyr"/>
    <property type="match status" value="1"/>
</dbReference>
<dbReference type="Pfam" id="PF02780">
    <property type="entry name" value="Transketolase_C"/>
    <property type="match status" value="1"/>
</dbReference>
<dbReference type="SMART" id="SM00861">
    <property type="entry name" value="Transket_pyr"/>
    <property type="match status" value="1"/>
</dbReference>
<dbReference type="SUPFAM" id="SSF52518">
    <property type="entry name" value="Thiamin diphosphate-binding fold (THDP-binding)"/>
    <property type="match status" value="2"/>
</dbReference>
<dbReference type="SUPFAM" id="SSF52922">
    <property type="entry name" value="TK C-terminal domain-like"/>
    <property type="match status" value="1"/>
</dbReference>
<dbReference type="PROSITE" id="PS00801">
    <property type="entry name" value="TRANSKETOLASE_1"/>
    <property type="match status" value="1"/>
</dbReference>
<dbReference type="PROSITE" id="PS00802">
    <property type="entry name" value="TRANSKETOLASE_2"/>
    <property type="match status" value="1"/>
</dbReference>
<feature type="chain" id="PRO_0000256424" description="1-deoxy-D-xylulose-5-phosphate synthase 1">
    <location>
        <begin position="1"/>
        <end position="637"/>
    </location>
</feature>
<feature type="binding site" evidence="1">
    <location>
        <position position="74"/>
    </location>
    <ligand>
        <name>thiamine diphosphate</name>
        <dbReference type="ChEBI" id="CHEBI:58937"/>
    </ligand>
</feature>
<feature type="binding site" evidence="1">
    <location>
        <begin position="115"/>
        <end position="117"/>
    </location>
    <ligand>
        <name>thiamine diphosphate</name>
        <dbReference type="ChEBI" id="CHEBI:58937"/>
    </ligand>
</feature>
<feature type="binding site" evidence="1">
    <location>
        <position position="146"/>
    </location>
    <ligand>
        <name>Mg(2+)</name>
        <dbReference type="ChEBI" id="CHEBI:18420"/>
    </ligand>
</feature>
<feature type="binding site" evidence="1">
    <location>
        <begin position="147"/>
        <end position="148"/>
    </location>
    <ligand>
        <name>thiamine diphosphate</name>
        <dbReference type="ChEBI" id="CHEBI:58937"/>
    </ligand>
</feature>
<feature type="binding site" evidence="1">
    <location>
        <position position="175"/>
    </location>
    <ligand>
        <name>Mg(2+)</name>
        <dbReference type="ChEBI" id="CHEBI:18420"/>
    </ligand>
</feature>
<feature type="binding site" evidence="1">
    <location>
        <position position="175"/>
    </location>
    <ligand>
        <name>thiamine diphosphate</name>
        <dbReference type="ChEBI" id="CHEBI:58937"/>
    </ligand>
</feature>
<feature type="binding site" evidence="1">
    <location>
        <position position="286"/>
    </location>
    <ligand>
        <name>thiamine diphosphate</name>
        <dbReference type="ChEBI" id="CHEBI:58937"/>
    </ligand>
</feature>
<feature type="binding site" evidence="1">
    <location>
        <position position="368"/>
    </location>
    <ligand>
        <name>thiamine diphosphate</name>
        <dbReference type="ChEBI" id="CHEBI:58937"/>
    </ligand>
</feature>
<sequence length="637" mass="68013">MSTLLDTITCPADLKKIPRDQLPALAEEIRAFLLETVSRTGGHLASNLGVVELSIALHYCFDSPTDRFVWDVGHQAYTHKILTGRRDRFHTQRQYGGISGFPKRSESSHDAFDTGHSSTSISAGLGMAMARELRGGSNKVVAVIGDGSMTGGIAFEALNQAGHLKKNLIVVLNDNEMSISPNVGAFSSFVSRKLTGSYFRELKKEVQGLLQNIPAIGKDILQFARRAENSLKGFLTPGMLFEALGFDYIGPIQGHNLPQLLEVFENARGLDGPVVVHVMTTKGKGYVPAETNPSAFHGVGPFDVATGKTTGSKPGAASYTGIFGDTLAQLARENEKIVAITAAMPDGTGLTGFAKEFPERFFDVGIAEQHAVTFAAGLAAEGFRPVTAIYSTFLQRAYDQVFHDVCLQNLPVVFALDRGGVVGDDGPTHHGVFDLSYLRHLPGMTLMAPKDENELRHMLKTAVSHDGPIALRYPRGAGCGIPLDQELREIPIGTGEILAEGDDVAIIAIGITVLPALEAARTLAEKGIRATVINARFVKPLDREMILQAARRTGCIITAEENALQGGFGSAVLELLADEGMTGVRVKRLGIPDRFVEQGPQPQLRADLGIDAAGIAAATEAFLAAKGAPAPALSMVK</sequence>
<reference key="1">
    <citation type="journal article" date="2003" name="Science">
        <title>Genome of Geobacter sulfurreducens: metal reduction in subsurface environments.</title>
        <authorList>
            <person name="Methe B.A."/>
            <person name="Nelson K.E."/>
            <person name="Eisen J.A."/>
            <person name="Paulsen I.T."/>
            <person name="Nelson W.C."/>
            <person name="Heidelberg J.F."/>
            <person name="Wu D."/>
            <person name="Wu M."/>
            <person name="Ward N.L."/>
            <person name="Beanan M.J."/>
            <person name="Dodson R.J."/>
            <person name="Madupu R."/>
            <person name="Brinkac L.M."/>
            <person name="Daugherty S.C."/>
            <person name="DeBoy R.T."/>
            <person name="Durkin A.S."/>
            <person name="Gwinn M.L."/>
            <person name="Kolonay J.F."/>
            <person name="Sullivan S.A."/>
            <person name="Haft D.H."/>
            <person name="Selengut J."/>
            <person name="Davidsen T.M."/>
            <person name="Zafar N."/>
            <person name="White O."/>
            <person name="Tran B."/>
            <person name="Romero C."/>
            <person name="Forberger H.A."/>
            <person name="Weidman J.F."/>
            <person name="Khouri H.M."/>
            <person name="Feldblyum T.V."/>
            <person name="Utterback T.R."/>
            <person name="Van Aken S.E."/>
            <person name="Lovley D.R."/>
            <person name="Fraser C.M."/>
        </authorList>
    </citation>
    <scope>NUCLEOTIDE SEQUENCE [LARGE SCALE GENOMIC DNA]</scope>
    <source>
        <strain>ATCC 51573 / DSM 12127 / PCA</strain>
    </source>
</reference>
<protein>
    <recommendedName>
        <fullName evidence="1">1-deoxy-D-xylulose-5-phosphate synthase 1</fullName>
        <ecNumber evidence="1">2.2.1.7</ecNumber>
    </recommendedName>
    <alternativeName>
        <fullName evidence="1">1-deoxyxylulose-5-phosphate synthase 1</fullName>
        <shortName evidence="1">DXP synthase 1</shortName>
        <shortName evidence="1">DXPS 1</shortName>
    </alternativeName>
</protein>
<name>DXS1_GEOSL</name>
<organism>
    <name type="scientific">Geobacter sulfurreducens (strain ATCC 51573 / DSM 12127 / PCA)</name>
    <dbReference type="NCBI Taxonomy" id="243231"/>
    <lineage>
        <taxon>Bacteria</taxon>
        <taxon>Pseudomonadati</taxon>
        <taxon>Thermodesulfobacteriota</taxon>
        <taxon>Desulfuromonadia</taxon>
        <taxon>Geobacterales</taxon>
        <taxon>Geobacteraceae</taxon>
        <taxon>Geobacter</taxon>
    </lineage>
</organism>
<evidence type="ECO:0000255" key="1">
    <source>
        <dbReference type="HAMAP-Rule" id="MF_00315"/>
    </source>
</evidence>
<accession>Q74FC3</accession>
<keyword id="KW-0414">Isoprene biosynthesis</keyword>
<keyword id="KW-0460">Magnesium</keyword>
<keyword id="KW-0479">Metal-binding</keyword>
<keyword id="KW-1185">Reference proteome</keyword>
<keyword id="KW-0784">Thiamine biosynthesis</keyword>
<keyword id="KW-0786">Thiamine pyrophosphate</keyword>
<keyword id="KW-0808">Transferase</keyword>